<gene>
    <name evidence="1" type="primary">secB</name>
    <name type="ordered locus">WD_0106</name>
</gene>
<organism>
    <name type="scientific">Wolbachia pipientis wMel</name>
    <dbReference type="NCBI Taxonomy" id="163164"/>
    <lineage>
        <taxon>Bacteria</taxon>
        <taxon>Pseudomonadati</taxon>
        <taxon>Pseudomonadota</taxon>
        <taxon>Alphaproteobacteria</taxon>
        <taxon>Rickettsiales</taxon>
        <taxon>Anaplasmataceae</taxon>
        <taxon>Wolbachieae</taxon>
        <taxon>Wolbachia</taxon>
    </lineage>
</organism>
<keyword id="KW-0143">Chaperone</keyword>
<keyword id="KW-0963">Cytoplasm</keyword>
<keyword id="KW-0653">Protein transport</keyword>
<keyword id="KW-0811">Translocation</keyword>
<keyword id="KW-0813">Transport</keyword>
<proteinExistence type="inferred from homology"/>
<comment type="function">
    <text evidence="1">One of the proteins required for the normal export of preproteins out of the cell cytoplasm. It is a molecular chaperone that binds to a subset of precursor proteins, maintaining them in a translocation-competent state. It also specifically binds to its receptor SecA.</text>
</comment>
<comment type="subunit">
    <text evidence="1">Homotetramer, a dimer of dimers. One homotetramer interacts with 1 SecA dimer.</text>
</comment>
<comment type="subcellular location">
    <subcellularLocation>
        <location evidence="1">Cytoplasm</location>
    </subcellularLocation>
</comment>
<comment type="similarity">
    <text evidence="1">Belongs to the SecB family.</text>
</comment>
<reference key="1">
    <citation type="journal article" date="2004" name="PLoS Biol.">
        <title>Phylogenomics of the reproductive parasite Wolbachia pipientis wMel: a streamlined genome overrun by mobile genetic elements.</title>
        <authorList>
            <person name="Wu M."/>
            <person name="Sun L.V."/>
            <person name="Vamathevan J.J."/>
            <person name="Riegler M."/>
            <person name="DeBoy R.T."/>
            <person name="Brownlie J.C."/>
            <person name="McGraw E.A."/>
            <person name="Martin W."/>
            <person name="Esser C."/>
            <person name="Ahmadinejad N."/>
            <person name="Wiegand C."/>
            <person name="Madupu R."/>
            <person name="Beanan M.J."/>
            <person name="Brinkac L.M."/>
            <person name="Daugherty S.C."/>
            <person name="Durkin A.S."/>
            <person name="Kolonay J.F."/>
            <person name="Nelson W.C."/>
            <person name="Mohamoud Y."/>
            <person name="Lee P."/>
            <person name="Berry K.J."/>
            <person name="Young M.B."/>
            <person name="Utterback T.R."/>
            <person name="Weidman J.F."/>
            <person name="Nierman W.C."/>
            <person name="Paulsen I.T."/>
            <person name="Nelson K.E."/>
            <person name="Tettelin H."/>
            <person name="O'Neill S.L."/>
            <person name="Eisen J.A."/>
        </authorList>
    </citation>
    <scope>NUCLEOTIDE SEQUENCE [LARGE SCALE GENOMIC DNA]</scope>
</reference>
<protein>
    <recommendedName>
        <fullName evidence="1">Protein-export protein SecB</fullName>
    </recommendedName>
</protein>
<name>SECB_WOLPM</name>
<accession>Q73IQ0</accession>
<evidence type="ECO:0000255" key="1">
    <source>
        <dbReference type="HAMAP-Rule" id="MF_00821"/>
    </source>
</evidence>
<sequence>MPQQKMRIHGQYVKDLSFENPNSPFLSSSKAPDINVMVNINSAKLEGTKNKEEVNEEKSFHEITLHIEVKATVKDEGIKDGVAFICETKYCGIFSIENLKELSEEEVRQALFIGGPTFLFPFAREIIARVTSSGGFPPLMLDPIDFETMYEQQGQQQKSNGSNSNFN</sequence>
<feature type="chain" id="PRO_0000055425" description="Protein-export protein SecB">
    <location>
        <begin position="1"/>
        <end position="167"/>
    </location>
</feature>
<dbReference type="EMBL" id="AE017196">
    <property type="protein sequence ID" value="AAS13861.1"/>
    <property type="molecule type" value="Genomic_DNA"/>
</dbReference>
<dbReference type="RefSeq" id="WP_006279761.1">
    <property type="nucleotide sequence ID" value="NZ_OX384529.1"/>
</dbReference>
<dbReference type="SMR" id="Q73IQ0"/>
<dbReference type="EnsemblBacteria" id="AAS13861">
    <property type="protein sequence ID" value="AAS13861"/>
    <property type="gene ID" value="WD_0106"/>
</dbReference>
<dbReference type="GeneID" id="70035596"/>
<dbReference type="KEGG" id="wol:WD_0106"/>
<dbReference type="eggNOG" id="COG1952">
    <property type="taxonomic scope" value="Bacteria"/>
</dbReference>
<dbReference type="Proteomes" id="UP000008215">
    <property type="component" value="Chromosome"/>
</dbReference>
<dbReference type="GO" id="GO:0005737">
    <property type="term" value="C:cytoplasm"/>
    <property type="evidence" value="ECO:0007669"/>
    <property type="project" value="UniProtKB-SubCell"/>
</dbReference>
<dbReference type="GO" id="GO:0051082">
    <property type="term" value="F:unfolded protein binding"/>
    <property type="evidence" value="ECO:0007669"/>
    <property type="project" value="InterPro"/>
</dbReference>
<dbReference type="GO" id="GO:0006457">
    <property type="term" value="P:protein folding"/>
    <property type="evidence" value="ECO:0007669"/>
    <property type="project" value="UniProtKB-UniRule"/>
</dbReference>
<dbReference type="GO" id="GO:0051262">
    <property type="term" value="P:protein tetramerization"/>
    <property type="evidence" value="ECO:0007669"/>
    <property type="project" value="InterPro"/>
</dbReference>
<dbReference type="GO" id="GO:0015031">
    <property type="term" value="P:protein transport"/>
    <property type="evidence" value="ECO:0007669"/>
    <property type="project" value="UniProtKB-UniRule"/>
</dbReference>
<dbReference type="Gene3D" id="3.10.420.10">
    <property type="entry name" value="SecB-like"/>
    <property type="match status" value="1"/>
</dbReference>
<dbReference type="HAMAP" id="MF_00821">
    <property type="entry name" value="SecB"/>
    <property type="match status" value="1"/>
</dbReference>
<dbReference type="InterPro" id="IPR003708">
    <property type="entry name" value="SecB"/>
</dbReference>
<dbReference type="InterPro" id="IPR035958">
    <property type="entry name" value="SecB-like_sf"/>
</dbReference>
<dbReference type="NCBIfam" id="NF004392">
    <property type="entry name" value="PRK05751.1-3"/>
    <property type="match status" value="1"/>
</dbReference>
<dbReference type="NCBIfam" id="TIGR00809">
    <property type="entry name" value="secB"/>
    <property type="match status" value="1"/>
</dbReference>
<dbReference type="PANTHER" id="PTHR36918">
    <property type="match status" value="1"/>
</dbReference>
<dbReference type="PANTHER" id="PTHR36918:SF1">
    <property type="entry name" value="PROTEIN-EXPORT PROTEIN SECB"/>
    <property type="match status" value="1"/>
</dbReference>
<dbReference type="Pfam" id="PF02556">
    <property type="entry name" value="SecB"/>
    <property type="match status" value="1"/>
</dbReference>
<dbReference type="SUPFAM" id="SSF54611">
    <property type="entry name" value="SecB-like"/>
    <property type="match status" value="1"/>
</dbReference>